<dbReference type="EC" id="7.2.2.20" evidence="1"/>
<dbReference type="EMBL" id="AL513382">
    <property type="protein sequence ID" value="CAD05643.1"/>
    <property type="molecule type" value="Genomic_DNA"/>
</dbReference>
<dbReference type="EMBL" id="AE014613">
    <property type="protein sequence ID" value="AAO68657.1"/>
    <property type="molecule type" value="Genomic_DNA"/>
</dbReference>
<dbReference type="RefSeq" id="NP_456459.1">
    <property type="nucleotide sequence ID" value="NC_003198.1"/>
</dbReference>
<dbReference type="RefSeq" id="WP_000203015.1">
    <property type="nucleotide sequence ID" value="NZ_WSUR01000004.1"/>
</dbReference>
<dbReference type="SMR" id="Q8Z5W6"/>
<dbReference type="STRING" id="220341.gene:17586008"/>
<dbReference type="KEGG" id="stt:t0985"/>
<dbReference type="KEGG" id="sty:STY2100"/>
<dbReference type="PATRIC" id="fig|220341.7.peg.2110"/>
<dbReference type="eggNOG" id="COG1121">
    <property type="taxonomic scope" value="Bacteria"/>
</dbReference>
<dbReference type="HOGENOM" id="CLU_000604_1_11_6"/>
<dbReference type="OMA" id="GHDHVHP"/>
<dbReference type="OrthoDB" id="9780942at2"/>
<dbReference type="Proteomes" id="UP000000541">
    <property type="component" value="Chromosome"/>
</dbReference>
<dbReference type="Proteomes" id="UP000002670">
    <property type="component" value="Chromosome"/>
</dbReference>
<dbReference type="GO" id="GO:0005886">
    <property type="term" value="C:plasma membrane"/>
    <property type="evidence" value="ECO:0007669"/>
    <property type="project" value="UniProtKB-SubCell"/>
</dbReference>
<dbReference type="GO" id="GO:0015633">
    <property type="term" value="F:ABC-type zinc transporter activity"/>
    <property type="evidence" value="ECO:0007669"/>
    <property type="project" value="UniProtKB-EC"/>
</dbReference>
<dbReference type="GO" id="GO:0005524">
    <property type="term" value="F:ATP binding"/>
    <property type="evidence" value="ECO:0007669"/>
    <property type="project" value="UniProtKB-KW"/>
</dbReference>
<dbReference type="GO" id="GO:0016887">
    <property type="term" value="F:ATP hydrolysis activity"/>
    <property type="evidence" value="ECO:0007669"/>
    <property type="project" value="InterPro"/>
</dbReference>
<dbReference type="GO" id="GO:0010043">
    <property type="term" value="P:response to zinc ion"/>
    <property type="evidence" value="ECO:0007669"/>
    <property type="project" value="TreeGrafter"/>
</dbReference>
<dbReference type="CDD" id="cd03235">
    <property type="entry name" value="ABC_Metallic_Cations"/>
    <property type="match status" value="1"/>
</dbReference>
<dbReference type="FunFam" id="3.40.50.300:FF:000392">
    <property type="entry name" value="Zinc import ATP-binding protein ZnuC"/>
    <property type="match status" value="1"/>
</dbReference>
<dbReference type="Gene3D" id="3.40.50.300">
    <property type="entry name" value="P-loop containing nucleotide triphosphate hydrolases"/>
    <property type="match status" value="1"/>
</dbReference>
<dbReference type="InterPro" id="IPR003593">
    <property type="entry name" value="AAA+_ATPase"/>
</dbReference>
<dbReference type="InterPro" id="IPR003439">
    <property type="entry name" value="ABC_transporter-like_ATP-bd"/>
</dbReference>
<dbReference type="InterPro" id="IPR050153">
    <property type="entry name" value="Metal_Ion_Import_ABC"/>
</dbReference>
<dbReference type="InterPro" id="IPR027417">
    <property type="entry name" value="P-loop_NTPase"/>
</dbReference>
<dbReference type="NCBIfam" id="NF007090">
    <property type="entry name" value="PRK09544.1"/>
    <property type="match status" value="1"/>
</dbReference>
<dbReference type="PANTHER" id="PTHR42734">
    <property type="entry name" value="METAL TRANSPORT SYSTEM ATP-BINDING PROTEIN TM_0124-RELATED"/>
    <property type="match status" value="1"/>
</dbReference>
<dbReference type="PANTHER" id="PTHR42734:SF9">
    <property type="entry name" value="ZINC IMPORT ATP-BINDING PROTEIN ZNUC"/>
    <property type="match status" value="1"/>
</dbReference>
<dbReference type="Pfam" id="PF00005">
    <property type="entry name" value="ABC_tran"/>
    <property type="match status" value="1"/>
</dbReference>
<dbReference type="SMART" id="SM00382">
    <property type="entry name" value="AAA"/>
    <property type="match status" value="1"/>
</dbReference>
<dbReference type="SUPFAM" id="SSF52540">
    <property type="entry name" value="P-loop containing nucleoside triphosphate hydrolases"/>
    <property type="match status" value="1"/>
</dbReference>
<dbReference type="PROSITE" id="PS50893">
    <property type="entry name" value="ABC_TRANSPORTER_2"/>
    <property type="match status" value="1"/>
</dbReference>
<dbReference type="PROSITE" id="PS51298">
    <property type="entry name" value="ZNUC"/>
    <property type="match status" value="1"/>
</dbReference>
<name>ZNUC_SALTI</name>
<gene>
    <name evidence="1" type="primary">znuC</name>
    <name type="ordered locus">STY2100</name>
    <name type="ordered locus">t0985</name>
</gene>
<keyword id="KW-0067">ATP-binding</keyword>
<keyword id="KW-0997">Cell inner membrane</keyword>
<keyword id="KW-1003">Cell membrane</keyword>
<keyword id="KW-0406">Ion transport</keyword>
<keyword id="KW-0472">Membrane</keyword>
<keyword id="KW-0547">Nucleotide-binding</keyword>
<keyword id="KW-1278">Translocase</keyword>
<keyword id="KW-0813">Transport</keyword>
<keyword id="KW-0862">Zinc</keyword>
<keyword id="KW-0864">Zinc transport</keyword>
<comment type="function">
    <text evidence="1">Part of the ABC transporter complex ZnuABC involved in zinc import. Responsible for energy coupling to the transport system.</text>
</comment>
<comment type="catalytic activity">
    <reaction evidence="1">
        <text>Zn(2+)(out) + ATP(in) + H2O(in) = Zn(2+)(in) + ADP(in) + phosphate(in) + H(+)(in)</text>
        <dbReference type="Rhea" id="RHEA:29795"/>
        <dbReference type="ChEBI" id="CHEBI:15377"/>
        <dbReference type="ChEBI" id="CHEBI:15378"/>
        <dbReference type="ChEBI" id="CHEBI:29105"/>
        <dbReference type="ChEBI" id="CHEBI:30616"/>
        <dbReference type="ChEBI" id="CHEBI:43474"/>
        <dbReference type="ChEBI" id="CHEBI:456216"/>
        <dbReference type="EC" id="7.2.2.20"/>
    </reaction>
</comment>
<comment type="subunit">
    <text evidence="1">The complex is composed of two ATP-binding proteins (ZnuC), two transmembrane proteins (ZnuB) and a solute-binding protein (ZnuA).</text>
</comment>
<comment type="subcellular location">
    <subcellularLocation>
        <location evidence="1">Cell inner membrane</location>
        <topology evidence="1">Peripheral membrane protein</topology>
    </subcellularLocation>
</comment>
<comment type="similarity">
    <text evidence="1">Belongs to the ABC transporter superfamily. Zinc importer (TC 3.A.1.15.5) family.</text>
</comment>
<accession>Q8Z5W6</accession>
<accession>Q7CAK8</accession>
<evidence type="ECO:0000255" key="1">
    <source>
        <dbReference type="HAMAP-Rule" id="MF_01725"/>
    </source>
</evidence>
<sequence length="251" mass="27731">MTSLVSLENVSVSFGQRRVLSDVSLELSPGKILTLLGPNGAGKSTLVRVVLGLVAPDEGVIKRNGQLRIGYVPQKLYLDTTLPLTVNRFLRLRPCTQKTDILPALKRVQAGHLIDAPMQKLSGGETQRVLLARALLNRPQLLVLDEPTQGVDVNGQVALYDLIDQLRRELDCAVLMVSHDLHLVMAKTDEVLCLNHHICCSGAPEVVSMHPEFISMFGPRGAEQLGIYRHHHNHRHDLQGRIVLRRGNGHS</sequence>
<protein>
    <recommendedName>
        <fullName evidence="1">Zinc import ATP-binding protein ZnuC</fullName>
        <ecNumber evidence="1">7.2.2.20</ecNumber>
    </recommendedName>
</protein>
<reference key="1">
    <citation type="journal article" date="2001" name="Nature">
        <title>Complete genome sequence of a multiple drug resistant Salmonella enterica serovar Typhi CT18.</title>
        <authorList>
            <person name="Parkhill J."/>
            <person name="Dougan G."/>
            <person name="James K.D."/>
            <person name="Thomson N.R."/>
            <person name="Pickard D."/>
            <person name="Wain J."/>
            <person name="Churcher C.M."/>
            <person name="Mungall K.L."/>
            <person name="Bentley S.D."/>
            <person name="Holden M.T.G."/>
            <person name="Sebaihia M."/>
            <person name="Baker S."/>
            <person name="Basham D."/>
            <person name="Brooks K."/>
            <person name="Chillingworth T."/>
            <person name="Connerton P."/>
            <person name="Cronin A."/>
            <person name="Davis P."/>
            <person name="Davies R.M."/>
            <person name="Dowd L."/>
            <person name="White N."/>
            <person name="Farrar J."/>
            <person name="Feltwell T."/>
            <person name="Hamlin N."/>
            <person name="Haque A."/>
            <person name="Hien T.T."/>
            <person name="Holroyd S."/>
            <person name="Jagels K."/>
            <person name="Krogh A."/>
            <person name="Larsen T.S."/>
            <person name="Leather S."/>
            <person name="Moule S."/>
            <person name="O'Gaora P."/>
            <person name="Parry C."/>
            <person name="Quail M.A."/>
            <person name="Rutherford K.M."/>
            <person name="Simmonds M."/>
            <person name="Skelton J."/>
            <person name="Stevens K."/>
            <person name="Whitehead S."/>
            <person name="Barrell B.G."/>
        </authorList>
    </citation>
    <scope>NUCLEOTIDE SEQUENCE [LARGE SCALE GENOMIC DNA]</scope>
    <source>
        <strain>CT18</strain>
    </source>
</reference>
<reference key="2">
    <citation type="journal article" date="2003" name="J. Bacteriol.">
        <title>Comparative genomics of Salmonella enterica serovar Typhi strains Ty2 and CT18.</title>
        <authorList>
            <person name="Deng W."/>
            <person name="Liou S.-R."/>
            <person name="Plunkett G. III"/>
            <person name="Mayhew G.F."/>
            <person name="Rose D.J."/>
            <person name="Burland V."/>
            <person name="Kodoyianni V."/>
            <person name="Schwartz D.C."/>
            <person name="Blattner F.R."/>
        </authorList>
    </citation>
    <scope>NUCLEOTIDE SEQUENCE [LARGE SCALE GENOMIC DNA]</scope>
    <source>
        <strain>ATCC 700931 / Ty2</strain>
    </source>
</reference>
<feature type="chain" id="PRO_0000281548" description="Zinc import ATP-binding protein ZnuC">
    <location>
        <begin position="1"/>
        <end position="251"/>
    </location>
</feature>
<feature type="domain" description="ABC transporter" evidence="1">
    <location>
        <begin position="5"/>
        <end position="220"/>
    </location>
</feature>
<feature type="binding site" evidence="1">
    <location>
        <begin position="37"/>
        <end position="44"/>
    </location>
    <ligand>
        <name>ATP</name>
        <dbReference type="ChEBI" id="CHEBI:30616"/>
    </ligand>
</feature>
<proteinExistence type="inferred from homology"/>
<organism>
    <name type="scientific">Salmonella typhi</name>
    <dbReference type="NCBI Taxonomy" id="90370"/>
    <lineage>
        <taxon>Bacteria</taxon>
        <taxon>Pseudomonadati</taxon>
        <taxon>Pseudomonadota</taxon>
        <taxon>Gammaproteobacteria</taxon>
        <taxon>Enterobacterales</taxon>
        <taxon>Enterobacteriaceae</taxon>
        <taxon>Salmonella</taxon>
    </lineage>
</organism>